<dbReference type="EC" id="2.7.7.23" evidence="1"/>
<dbReference type="EC" id="2.3.1.157" evidence="1"/>
<dbReference type="EMBL" id="CP000789">
    <property type="protein sequence ID" value="ABU69434.1"/>
    <property type="molecule type" value="Genomic_DNA"/>
</dbReference>
<dbReference type="RefSeq" id="WP_012126653.1">
    <property type="nucleotide sequence ID" value="NC_009783.1"/>
</dbReference>
<dbReference type="SMR" id="A7N0Z7"/>
<dbReference type="KEGG" id="vha:VIBHAR_00419"/>
<dbReference type="PATRIC" id="fig|338187.25.peg.2171"/>
<dbReference type="UniPathway" id="UPA00113">
    <property type="reaction ID" value="UER00532"/>
</dbReference>
<dbReference type="UniPathway" id="UPA00113">
    <property type="reaction ID" value="UER00533"/>
</dbReference>
<dbReference type="UniPathway" id="UPA00973"/>
<dbReference type="Proteomes" id="UP000008152">
    <property type="component" value="Chromosome I"/>
</dbReference>
<dbReference type="GO" id="GO:0005737">
    <property type="term" value="C:cytoplasm"/>
    <property type="evidence" value="ECO:0007669"/>
    <property type="project" value="UniProtKB-SubCell"/>
</dbReference>
<dbReference type="GO" id="GO:0016020">
    <property type="term" value="C:membrane"/>
    <property type="evidence" value="ECO:0007669"/>
    <property type="project" value="GOC"/>
</dbReference>
<dbReference type="GO" id="GO:0019134">
    <property type="term" value="F:glucosamine-1-phosphate N-acetyltransferase activity"/>
    <property type="evidence" value="ECO:0007669"/>
    <property type="project" value="UniProtKB-UniRule"/>
</dbReference>
<dbReference type="GO" id="GO:0000287">
    <property type="term" value="F:magnesium ion binding"/>
    <property type="evidence" value="ECO:0007669"/>
    <property type="project" value="UniProtKB-UniRule"/>
</dbReference>
<dbReference type="GO" id="GO:0003977">
    <property type="term" value="F:UDP-N-acetylglucosamine diphosphorylase activity"/>
    <property type="evidence" value="ECO:0007669"/>
    <property type="project" value="UniProtKB-UniRule"/>
</dbReference>
<dbReference type="GO" id="GO:0000902">
    <property type="term" value="P:cell morphogenesis"/>
    <property type="evidence" value="ECO:0007669"/>
    <property type="project" value="UniProtKB-UniRule"/>
</dbReference>
<dbReference type="GO" id="GO:0071555">
    <property type="term" value="P:cell wall organization"/>
    <property type="evidence" value="ECO:0007669"/>
    <property type="project" value="UniProtKB-KW"/>
</dbReference>
<dbReference type="GO" id="GO:0009245">
    <property type="term" value="P:lipid A biosynthetic process"/>
    <property type="evidence" value="ECO:0007669"/>
    <property type="project" value="UniProtKB-UniRule"/>
</dbReference>
<dbReference type="GO" id="GO:0009252">
    <property type="term" value="P:peptidoglycan biosynthetic process"/>
    <property type="evidence" value="ECO:0007669"/>
    <property type="project" value="UniProtKB-UniRule"/>
</dbReference>
<dbReference type="GO" id="GO:0008360">
    <property type="term" value="P:regulation of cell shape"/>
    <property type="evidence" value="ECO:0007669"/>
    <property type="project" value="UniProtKB-KW"/>
</dbReference>
<dbReference type="GO" id="GO:0006048">
    <property type="term" value="P:UDP-N-acetylglucosamine biosynthetic process"/>
    <property type="evidence" value="ECO:0007669"/>
    <property type="project" value="UniProtKB-UniPathway"/>
</dbReference>
<dbReference type="CDD" id="cd02540">
    <property type="entry name" value="GT2_GlmU_N_bac"/>
    <property type="match status" value="1"/>
</dbReference>
<dbReference type="CDD" id="cd03353">
    <property type="entry name" value="LbH_GlmU_C"/>
    <property type="match status" value="1"/>
</dbReference>
<dbReference type="FunFam" id="3.90.550.10:FF:000006">
    <property type="entry name" value="Bifunctional protein GlmU"/>
    <property type="match status" value="1"/>
</dbReference>
<dbReference type="Gene3D" id="2.160.10.10">
    <property type="entry name" value="Hexapeptide repeat proteins"/>
    <property type="match status" value="1"/>
</dbReference>
<dbReference type="Gene3D" id="3.90.550.10">
    <property type="entry name" value="Spore Coat Polysaccharide Biosynthesis Protein SpsA, Chain A"/>
    <property type="match status" value="1"/>
</dbReference>
<dbReference type="HAMAP" id="MF_01631">
    <property type="entry name" value="GlmU"/>
    <property type="match status" value="1"/>
</dbReference>
<dbReference type="InterPro" id="IPR005882">
    <property type="entry name" value="Bifunctional_GlmU"/>
</dbReference>
<dbReference type="InterPro" id="IPR050065">
    <property type="entry name" value="GlmU-like"/>
</dbReference>
<dbReference type="InterPro" id="IPR038009">
    <property type="entry name" value="GlmU_C_LbH"/>
</dbReference>
<dbReference type="InterPro" id="IPR001451">
    <property type="entry name" value="Hexapep"/>
</dbReference>
<dbReference type="InterPro" id="IPR018357">
    <property type="entry name" value="Hexapep_transf_CS"/>
</dbReference>
<dbReference type="InterPro" id="IPR025877">
    <property type="entry name" value="MobA-like_NTP_Trfase"/>
</dbReference>
<dbReference type="InterPro" id="IPR029044">
    <property type="entry name" value="Nucleotide-diphossugar_trans"/>
</dbReference>
<dbReference type="InterPro" id="IPR011004">
    <property type="entry name" value="Trimer_LpxA-like_sf"/>
</dbReference>
<dbReference type="NCBIfam" id="TIGR01173">
    <property type="entry name" value="glmU"/>
    <property type="match status" value="1"/>
</dbReference>
<dbReference type="NCBIfam" id="NF006986">
    <property type="entry name" value="PRK09451.1"/>
    <property type="match status" value="1"/>
</dbReference>
<dbReference type="PANTHER" id="PTHR43584:SF3">
    <property type="entry name" value="BIFUNCTIONAL PROTEIN GLMU"/>
    <property type="match status" value="1"/>
</dbReference>
<dbReference type="PANTHER" id="PTHR43584">
    <property type="entry name" value="NUCLEOTIDYL TRANSFERASE"/>
    <property type="match status" value="1"/>
</dbReference>
<dbReference type="Pfam" id="PF00132">
    <property type="entry name" value="Hexapep"/>
    <property type="match status" value="2"/>
</dbReference>
<dbReference type="Pfam" id="PF12804">
    <property type="entry name" value="NTP_transf_3"/>
    <property type="match status" value="1"/>
</dbReference>
<dbReference type="SUPFAM" id="SSF53448">
    <property type="entry name" value="Nucleotide-diphospho-sugar transferases"/>
    <property type="match status" value="1"/>
</dbReference>
<dbReference type="SUPFAM" id="SSF51161">
    <property type="entry name" value="Trimeric LpxA-like enzymes"/>
    <property type="match status" value="1"/>
</dbReference>
<dbReference type="PROSITE" id="PS00101">
    <property type="entry name" value="HEXAPEP_TRANSFERASES"/>
    <property type="match status" value="1"/>
</dbReference>
<gene>
    <name evidence="1" type="primary">glmU</name>
    <name type="ordered locus">VIBHAR_00419</name>
</gene>
<feature type="chain" id="PRO_1000069738" description="Bifunctional protein GlmU">
    <location>
        <begin position="1"/>
        <end position="453"/>
    </location>
</feature>
<feature type="region of interest" description="Pyrophosphorylase" evidence="1">
    <location>
        <begin position="1"/>
        <end position="226"/>
    </location>
</feature>
<feature type="region of interest" description="Linker" evidence="1">
    <location>
        <begin position="227"/>
        <end position="247"/>
    </location>
</feature>
<feature type="region of interest" description="N-acetyltransferase" evidence="1">
    <location>
        <begin position="248"/>
        <end position="453"/>
    </location>
</feature>
<feature type="active site" description="Proton acceptor" evidence="1">
    <location>
        <position position="360"/>
    </location>
</feature>
<feature type="binding site" evidence="1">
    <location>
        <begin position="8"/>
        <end position="11"/>
    </location>
    <ligand>
        <name>UDP-N-acetyl-alpha-D-glucosamine</name>
        <dbReference type="ChEBI" id="CHEBI:57705"/>
    </ligand>
</feature>
<feature type="binding site" evidence="1">
    <location>
        <position position="22"/>
    </location>
    <ligand>
        <name>UDP-N-acetyl-alpha-D-glucosamine</name>
        <dbReference type="ChEBI" id="CHEBI:57705"/>
    </ligand>
</feature>
<feature type="binding site" evidence="1">
    <location>
        <position position="73"/>
    </location>
    <ligand>
        <name>UDP-N-acetyl-alpha-D-glucosamine</name>
        <dbReference type="ChEBI" id="CHEBI:57705"/>
    </ligand>
</feature>
<feature type="binding site" evidence="1">
    <location>
        <begin position="78"/>
        <end position="79"/>
    </location>
    <ligand>
        <name>UDP-N-acetyl-alpha-D-glucosamine</name>
        <dbReference type="ChEBI" id="CHEBI:57705"/>
    </ligand>
</feature>
<feature type="binding site" evidence="1">
    <location>
        <begin position="100"/>
        <end position="102"/>
    </location>
    <ligand>
        <name>UDP-N-acetyl-alpha-D-glucosamine</name>
        <dbReference type="ChEBI" id="CHEBI:57705"/>
    </ligand>
</feature>
<feature type="binding site" evidence="1">
    <location>
        <position position="102"/>
    </location>
    <ligand>
        <name>Mg(2+)</name>
        <dbReference type="ChEBI" id="CHEBI:18420"/>
    </ligand>
</feature>
<feature type="binding site" evidence="1">
    <location>
        <position position="137"/>
    </location>
    <ligand>
        <name>UDP-N-acetyl-alpha-D-glucosamine</name>
        <dbReference type="ChEBI" id="CHEBI:57705"/>
    </ligand>
</feature>
<feature type="binding site" evidence="1">
    <location>
        <position position="151"/>
    </location>
    <ligand>
        <name>UDP-N-acetyl-alpha-D-glucosamine</name>
        <dbReference type="ChEBI" id="CHEBI:57705"/>
    </ligand>
</feature>
<feature type="binding site" evidence="1">
    <location>
        <position position="166"/>
    </location>
    <ligand>
        <name>UDP-N-acetyl-alpha-D-glucosamine</name>
        <dbReference type="ChEBI" id="CHEBI:57705"/>
    </ligand>
</feature>
<feature type="binding site" evidence="1">
    <location>
        <position position="224"/>
    </location>
    <ligand>
        <name>Mg(2+)</name>
        <dbReference type="ChEBI" id="CHEBI:18420"/>
    </ligand>
</feature>
<feature type="binding site" evidence="1">
    <location>
        <position position="224"/>
    </location>
    <ligand>
        <name>UDP-N-acetyl-alpha-D-glucosamine</name>
        <dbReference type="ChEBI" id="CHEBI:57705"/>
    </ligand>
</feature>
<feature type="binding site" evidence="1">
    <location>
        <position position="330"/>
    </location>
    <ligand>
        <name>UDP-N-acetyl-alpha-D-glucosamine</name>
        <dbReference type="ChEBI" id="CHEBI:57705"/>
    </ligand>
</feature>
<feature type="binding site" evidence="1">
    <location>
        <position position="348"/>
    </location>
    <ligand>
        <name>UDP-N-acetyl-alpha-D-glucosamine</name>
        <dbReference type="ChEBI" id="CHEBI:57705"/>
    </ligand>
</feature>
<feature type="binding site" evidence="1">
    <location>
        <position position="363"/>
    </location>
    <ligand>
        <name>UDP-N-acetyl-alpha-D-glucosamine</name>
        <dbReference type="ChEBI" id="CHEBI:57705"/>
    </ligand>
</feature>
<feature type="binding site" evidence="1">
    <location>
        <position position="374"/>
    </location>
    <ligand>
        <name>UDP-N-acetyl-alpha-D-glucosamine</name>
        <dbReference type="ChEBI" id="CHEBI:57705"/>
    </ligand>
</feature>
<feature type="binding site" evidence="1">
    <location>
        <position position="377"/>
    </location>
    <ligand>
        <name>acetyl-CoA</name>
        <dbReference type="ChEBI" id="CHEBI:57288"/>
    </ligand>
</feature>
<feature type="binding site" evidence="1">
    <location>
        <begin position="383"/>
        <end position="384"/>
    </location>
    <ligand>
        <name>acetyl-CoA</name>
        <dbReference type="ChEBI" id="CHEBI:57288"/>
    </ligand>
</feature>
<feature type="binding site" evidence="1">
    <location>
        <position position="402"/>
    </location>
    <ligand>
        <name>acetyl-CoA</name>
        <dbReference type="ChEBI" id="CHEBI:57288"/>
    </ligand>
</feature>
<feature type="binding site" evidence="1">
    <location>
        <position position="420"/>
    </location>
    <ligand>
        <name>acetyl-CoA</name>
        <dbReference type="ChEBI" id="CHEBI:57288"/>
    </ligand>
</feature>
<feature type="binding site" evidence="1">
    <location>
        <position position="437"/>
    </location>
    <ligand>
        <name>acetyl-CoA</name>
        <dbReference type="ChEBI" id="CHEBI:57288"/>
    </ligand>
</feature>
<organism>
    <name type="scientific">Vibrio campbellii (strain ATCC BAA-1116)</name>
    <dbReference type="NCBI Taxonomy" id="2902295"/>
    <lineage>
        <taxon>Bacteria</taxon>
        <taxon>Pseudomonadati</taxon>
        <taxon>Pseudomonadota</taxon>
        <taxon>Gammaproteobacteria</taxon>
        <taxon>Vibrionales</taxon>
        <taxon>Vibrionaceae</taxon>
        <taxon>Vibrio</taxon>
    </lineage>
</organism>
<sequence length="453" mass="48572">MKFSAVILAAGKGTRMYSNMPKVLHTLAGKPMAKHVIDTCTGLGAQNIHLVYGHGGDQMQQTLAEEPVNWVLQAEQLGTGHAVDQASPKFEDDEKVLVLYGDVPLISAETIENLLDAQPTGGIALLTVMLDNPMGYGRIIRKNGPVVAIVEQKEATEEQKLIKECNTGVLVATGGDLKRWLAGLNNENAQGEYYLTDVIAAAHDEGRAVEAVHPVNAIEVEGVNDRAQLARLERAFQSMQAQKLLEQGVMLRDPARFDLRGELQCGMDCEIDANVVIEGKVSLGDNVVIGAGCVLKDCEIDDNTVVRPYSVIEGATVGEECTVGPFTRLRPGAEMRNDSHVGNFVEVKNACIGEGSKANHLTYLGDAEIGQRTNIGAGTITCNYDGANKFKTVIGNDVFVGSDSQLVAPVTIADGATIGAGTTLTKDVAEGELVITRVKERKITGWQRPVKQK</sequence>
<proteinExistence type="inferred from homology"/>
<reference key="1">
    <citation type="submission" date="2007-08" db="EMBL/GenBank/DDBJ databases">
        <authorList>
            <consortium name="The Vibrio harveyi Genome Sequencing Project"/>
            <person name="Bassler B."/>
            <person name="Clifton S.W."/>
            <person name="Fulton L."/>
            <person name="Delehaunty K."/>
            <person name="Fronick C."/>
            <person name="Harrison M."/>
            <person name="Markivic C."/>
            <person name="Fulton R."/>
            <person name="Tin-Wollam A.-M."/>
            <person name="Shah N."/>
            <person name="Pepin K."/>
            <person name="Nash W."/>
            <person name="Thiruvilangam P."/>
            <person name="Bhonagiri V."/>
            <person name="Waters C."/>
            <person name="Tu K.C."/>
            <person name="Irgon J."/>
            <person name="Wilson R.K."/>
        </authorList>
    </citation>
    <scope>NUCLEOTIDE SEQUENCE [LARGE SCALE GENOMIC DNA]</scope>
    <source>
        <strain>ATCC BAA-1116 / BB120</strain>
    </source>
</reference>
<name>GLMU_VIBC1</name>
<comment type="function">
    <text evidence="1">Catalyzes the last two sequential reactions in the de novo biosynthetic pathway for UDP-N-acetylglucosamine (UDP-GlcNAc). The C-terminal domain catalyzes the transfer of acetyl group from acetyl coenzyme A to glucosamine-1-phosphate (GlcN-1-P) to produce N-acetylglucosamine-1-phosphate (GlcNAc-1-P), which is converted into UDP-GlcNAc by the transfer of uridine 5-monophosphate (from uridine 5-triphosphate), a reaction catalyzed by the N-terminal domain.</text>
</comment>
<comment type="catalytic activity">
    <reaction evidence="1">
        <text>alpha-D-glucosamine 1-phosphate + acetyl-CoA = N-acetyl-alpha-D-glucosamine 1-phosphate + CoA + H(+)</text>
        <dbReference type="Rhea" id="RHEA:13725"/>
        <dbReference type="ChEBI" id="CHEBI:15378"/>
        <dbReference type="ChEBI" id="CHEBI:57287"/>
        <dbReference type="ChEBI" id="CHEBI:57288"/>
        <dbReference type="ChEBI" id="CHEBI:57776"/>
        <dbReference type="ChEBI" id="CHEBI:58516"/>
        <dbReference type="EC" id="2.3.1.157"/>
    </reaction>
</comment>
<comment type="catalytic activity">
    <reaction evidence="1">
        <text>N-acetyl-alpha-D-glucosamine 1-phosphate + UTP + H(+) = UDP-N-acetyl-alpha-D-glucosamine + diphosphate</text>
        <dbReference type="Rhea" id="RHEA:13509"/>
        <dbReference type="ChEBI" id="CHEBI:15378"/>
        <dbReference type="ChEBI" id="CHEBI:33019"/>
        <dbReference type="ChEBI" id="CHEBI:46398"/>
        <dbReference type="ChEBI" id="CHEBI:57705"/>
        <dbReference type="ChEBI" id="CHEBI:57776"/>
        <dbReference type="EC" id="2.7.7.23"/>
    </reaction>
</comment>
<comment type="cofactor">
    <cofactor evidence="1">
        <name>Mg(2+)</name>
        <dbReference type="ChEBI" id="CHEBI:18420"/>
    </cofactor>
    <text evidence="1">Binds 1 Mg(2+) ion per subunit.</text>
</comment>
<comment type="pathway">
    <text evidence="1">Nucleotide-sugar biosynthesis; UDP-N-acetyl-alpha-D-glucosamine biosynthesis; N-acetyl-alpha-D-glucosamine 1-phosphate from alpha-D-glucosamine 6-phosphate (route II): step 2/2.</text>
</comment>
<comment type="pathway">
    <text evidence="1">Nucleotide-sugar biosynthesis; UDP-N-acetyl-alpha-D-glucosamine biosynthesis; UDP-N-acetyl-alpha-D-glucosamine from N-acetyl-alpha-D-glucosamine 1-phosphate: step 1/1.</text>
</comment>
<comment type="pathway">
    <text evidence="1">Bacterial outer membrane biogenesis; LPS lipid A biosynthesis.</text>
</comment>
<comment type="subunit">
    <text evidence="1">Homotrimer.</text>
</comment>
<comment type="subcellular location">
    <subcellularLocation>
        <location evidence="1">Cytoplasm</location>
    </subcellularLocation>
</comment>
<comment type="similarity">
    <text evidence="1">In the N-terminal section; belongs to the N-acetylglucosamine-1-phosphate uridyltransferase family.</text>
</comment>
<comment type="similarity">
    <text evidence="1">In the C-terminal section; belongs to the transferase hexapeptide repeat family.</text>
</comment>
<protein>
    <recommendedName>
        <fullName evidence="1">Bifunctional protein GlmU</fullName>
    </recommendedName>
    <domain>
        <recommendedName>
            <fullName evidence="1">UDP-N-acetylglucosamine pyrophosphorylase</fullName>
            <ecNumber evidence="1">2.7.7.23</ecNumber>
        </recommendedName>
        <alternativeName>
            <fullName evidence="1">N-acetylglucosamine-1-phosphate uridyltransferase</fullName>
        </alternativeName>
    </domain>
    <domain>
        <recommendedName>
            <fullName evidence="1">Glucosamine-1-phosphate N-acetyltransferase</fullName>
            <ecNumber evidence="1">2.3.1.157</ecNumber>
        </recommendedName>
    </domain>
</protein>
<accession>A7N0Z7</accession>
<evidence type="ECO:0000255" key="1">
    <source>
        <dbReference type="HAMAP-Rule" id="MF_01631"/>
    </source>
</evidence>
<keyword id="KW-0012">Acyltransferase</keyword>
<keyword id="KW-0133">Cell shape</keyword>
<keyword id="KW-0961">Cell wall biogenesis/degradation</keyword>
<keyword id="KW-0963">Cytoplasm</keyword>
<keyword id="KW-0460">Magnesium</keyword>
<keyword id="KW-0479">Metal-binding</keyword>
<keyword id="KW-0511">Multifunctional enzyme</keyword>
<keyword id="KW-0548">Nucleotidyltransferase</keyword>
<keyword id="KW-0573">Peptidoglycan synthesis</keyword>
<keyword id="KW-0677">Repeat</keyword>
<keyword id="KW-0808">Transferase</keyword>